<name>AROK_HAEIE</name>
<gene>
    <name evidence="1" type="primary">aroK</name>
    <name type="ordered locus">CGSHiEE_02205</name>
</gene>
<organism>
    <name type="scientific">Haemophilus influenzae (strain PittEE)</name>
    <dbReference type="NCBI Taxonomy" id="374930"/>
    <lineage>
        <taxon>Bacteria</taxon>
        <taxon>Pseudomonadati</taxon>
        <taxon>Pseudomonadota</taxon>
        <taxon>Gammaproteobacteria</taxon>
        <taxon>Pasteurellales</taxon>
        <taxon>Pasteurellaceae</taxon>
        <taxon>Haemophilus</taxon>
    </lineage>
</organism>
<feature type="chain" id="PRO_1000022975" description="Shikimate kinase">
    <location>
        <begin position="1"/>
        <end position="180"/>
    </location>
</feature>
<feature type="binding site" evidence="1">
    <location>
        <begin position="14"/>
        <end position="19"/>
    </location>
    <ligand>
        <name>ATP</name>
        <dbReference type="ChEBI" id="CHEBI:30616"/>
    </ligand>
</feature>
<feature type="binding site" evidence="1">
    <location>
        <position position="18"/>
    </location>
    <ligand>
        <name>Mg(2+)</name>
        <dbReference type="ChEBI" id="CHEBI:18420"/>
    </ligand>
</feature>
<feature type="binding site" evidence="1">
    <location>
        <position position="36"/>
    </location>
    <ligand>
        <name>substrate</name>
    </ligand>
</feature>
<feature type="binding site" evidence="1">
    <location>
        <position position="60"/>
    </location>
    <ligand>
        <name>substrate</name>
    </ligand>
</feature>
<feature type="binding site" evidence="1">
    <location>
        <position position="82"/>
    </location>
    <ligand>
        <name>substrate</name>
    </ligand>
</feature>
<feature type="binding site" evidence="1">
    <location>
        <position position="120"/>
    </location>
    <ligand>
        <name>ATP</name>
        <dbReference type="ChEBI" id="CHEBI:30616"/>
    </ligand>
</feature>
<feature type="binding site" evidence="1">
    <location>
        <position position="140"/>
    </location>
    <ligand>
        <name>substrate</name>
    </ligand>
</feature>
<feature type="binding site" evidence="1">
    <location>
        <position position="157"/>
    </location>
    <ligand>
        <name>ATP</name>
        <dbReference type="ChEBI" id="CHEBI:30616"/>
    </ligand>
</feature>
<dbReference type="EC" id="2.7.1.71" evidence="1"/>
<dbReference type="EMBL" id="CP000671">
    <property type="protein sequence ID" value="ABQ97900.1"/>
    <property type="molecule type" value="Genomic_DNA"/>
</dbReference>
<dbReference type="SMR" id="A5UAU9"/>
<dbReference type="KEGG" id="hip:CGSHiEE_02205"/>
<dbReference type="HOGENOM" id="CLU_057607_2_2_6"/>
<dbReference type="UniPathway" id="UPA00053">
    <property type="reaction ID" value="UER00088"/>
</dbReference>
<dbReference type="GO" id="GO:0005829">
    <property type="term" value="C:cytosol"/>
    <property type="evidence" value="ECO:0007669"/>
    <property type="project" value="TreeGrafter"/>
</dbReference>
<dbReference type="GO" id="GO:0005524">
    <property type="term" value="F:ATP binding"/>
    <property type="evidence" value="ECO:0007669"/>
    <property type="project" value="UniProtKB-UniRule"/>
</dbReference>
<dbReference type="GO" id="GO:0000287">
    <property type="term" value="F:magnesium ion binding"/>
    <property type="evidence" value="ECO:0007669"/>
    <property type="project" value="UniProtKB-UniRule"/>
</dbReference>
<dbReference type="GO" id="GO:0004765">
    <property type="term" value="F:shikimate kinase activity"/>
    <property type="evidence" value="ECO:0007669"/>
    <property type="project" value="UniProtKB-UniRule"/>
</dbReference>
<dbReference type="GO" id="GO:0008652">
    <property type="term" value="P:amino acid biosynthetic process"/>
    <property type="evidence" value="ECO:0007669"/>
    <property type="project" value="UniProtKB-KW"/>
</dbReference>
<dbReference type="GO" id="GO:0009073">
    <property type="term" value="P:aromatic amino acid family biosynthetic process"/>
    <property type="evidence" value="ECO:0007669"/>
    <property type="project" value="UniProtKB-KW"/>
</dbReference>
<dbReference type="GO" id="GO:0009423">
    <property type="term" value="P:chorismate biosynthetic process"/>
    <property type="evidence" value="ECO:0007669"/>
    <property type="project" value="UniProtKB-UniRule"/>
</dbReference>
<dbReference type="CDD" id="cd00464">
    <property type="entry name" value="SK"/>
    <property type="match status" value="1"/>
</dbReference>
<dbReference type="FunFam" id="3.40.50.300:FF:000099">
    <property type="entry name" value="Shikimate kinase 1"/>
    <property type="match status" value="1"/>
</dbReference>
<dbReference type="Gene3D" id="3.40.50.300">
    <property type="entry name" value="P-loop containing nucleotide triphosphate hydrolases"/>
    <property type="match status" value="1"/>
</dbReference>
<dbReference type="HAMAP" id="MF_00109">
    <property type="entry name" value="Shikimate_kinase"/>
    <property type="match status" value="1"/>
</dbReference>
<dbReference type="InterPro" id="IPR027417">
    <property type="entry name" value="P-loop_NTPase"/>
</dbReference>
<dbReference type="InterPro" id="IPR031322">
    <property type="entry name" value="Shikimate/glucono_kinase"/>
</dbReference>
<dbReference type="InterPro" id="IPR000623">
    <property type="entry name" value="Shikimate_kinase/TSH1"/>
</dbReference>
<dbReference type="InterPro" id="IPR023000">
    <property type="entry name" value="Shikimate_kinase_CS"/>
</dbReference>
<dbReference type="NCBIfam" id="NF003456">
    <property type="entry name" value="PRK05057.1"/>
    <property type="match status" value="1"/>
</dbReference>
<dbReference type="PANTHER" id="PTHR21087">
    <property type="entry name" value="SHIKIMATE KINASE"/>
    <property type="match status" value="1"/>
</dbReference>
<dbReference type="PANTHER" id="PTHR21087:SF16">
    <property type="entry name" value="SHIKIMATE KINASE 1, CHLOROPLASTIC"/>
    <property type="match status" value="1"/>
</dbReference>
<dbReference type="Pfam" id="PF01202">
    <property type="entry name" value="SKI"/>
    <property type="match status" value="1"/>
</dbReference>
<dbReference type="PRINTS" id="PR01100">
    <property type="entry name" value="SHIKIMTKNASE"/>
</dbReference>
<dbReference type="SUPFAM" id="SSF52540">
    <property type="entry name" value="P-loop containing nucleoside triphosphate hydrolases"/>
    <property type="match status" value="1"/>
</dbReference>
<dbReference type="PROSITE" id="PS01128">
    <property type="entry name" value="SHIKIMATE_KINASE"/>
    <property type="match status" value="1"/>
</dbReference>
<reference key="1">
    <citation type="journal article" date="2007" name="Genome Biol.">
        <title>Characterization and modeling of the Haemophilus influenzae core and supragenomes based on the complete genomic sequences of Rd and 12 clinical nontypeable strains.</title>
        <authorList>
            <person name="Hogg J.S."/>
            <person name="Hu F.Z."/>
            <person name="Janto B."/>
            <person name="Boissy R."/>
            <person name="Hayes J."/>
            <person name="Keefe R."/>
            <person name="Post J.C."/>
            <person name="Ehrlich G.D."/>
        </authorList>
    </citation>
    <scope>NUCLEOTIDE SEQUENCE [LARGE SCALE GENOMIC DNA]</scope>
    <source>
        <strain>PittEE</strain>
    </source>
</reference>
<keyword id="KW-0028">Amino-acid biosynthesis</keyword>
<keyword id="KW-0057">Aromatic amino acid biosynthesis</keyword>
<keyword id="KW-0067">ATP-binding</keyword>
<keyword id="KW-0963">Cytoplasm</keyword>
<keyword id="KW-0418">Kinase</keyword>
<keyword id="KW-0460">Magnesium</keyword>
<keyword id="KW-0479">Metal-binding</keyword>
<keyword id="KW-0547">Nucleotide-binding</keyword>
<keyword id="KW-0808">Transferase</keyword>
<sequence length="180" mass="20322">MAEKRNIFLVGPMGAGKSTIGRQLAQQLNMDFIDSDAVIEERTGADISWIFDLEGEDGFRKREERIINELTQMQGIVLSTGGGAVLSKENRNYLSARGIVIYLETTVEKQFQRTQRDKKRPLLQDAENPRQVLEDLAKIRNPLYEEIADITLPTDEQNAKIMVNQIVDLIDNMNGLNGTL</sequence>
<protein>
    <recommendedName>
        <fullName evidence="1">Shikimate kinase</fullName>
        <shortName evidence="1">SK</shortName>
        <ecNumber evidence="1">2.7.1.71</ecNumber>
    </recommendedName>
</protein>
<evidence type="ECO:0000255" key="1">
    <source>
        <dbReference type="HAMAP-Rule" id="MF_00109"/>
    </source>
</evidence>
<proteinExistence type="inferred from homology"/>
<accession>A5UAU9</accession>
<comment type="function">
    <text evidence="1">Catalyzes the specific phosphorylation of the 3-hydroxyl group of shikimic acid using ATP as a cosubstrate.</text>
</comment>
<comment type="catalytic activity">
    <reaction evidence="1">
        <text>shikimate + ATP = 3-phosphoshikimate + ADP + H(+)</text>
        <dbReference type="Rhea" id="RHEA:13121"/>
        <dbReference type="ChEBI" id="CHEBI:15378"/>
        <dbReference type="ChEBI" id="CHEBI:30616"/>
        <dbReference type="ChEBI" id="CHEBI:36208"/>
        <dbReference type="ChEBI" id="CHEBI:145989"/>
        <dbReference type="ChEBI" id="CHEBI:456216"/>
        <dbReference type="EC" id="2.7.1.71"/>
    </reaction>
</comment>
<comment type="cofactor">
    <cofactor evidence="1">
        <name>Mg(2+)</name>
        <dbReference type="ChEBI" id="CHEBI:18420"/>
    </cofactor>
    <text evidence="1">Binds 1 Mg(2+) ion per subunit.</text>
</comment>
<comment type="pathway">
    <text evidence="1">Metabolic intermediate biosynthesis; chorismate biosynthesis; chorismate from D-erythrose 4-phosphate and phosphoenolpyruvate: step 5/7.</text>
</comment>
<comment type="subunit">
    <text evidence="1">Monomer.</text>
</comment>
<comment type="subcellular location">
    <subcellularLocation>
        <location evidence="1">Cytoplasm</location>
    </subcellularLocation>
</comment>
<comment type="similarity">
    <text evidence="1">Belongs to the shikimate kinase family.</text>
</comment>